<feature type="chain" id="PRO_0000320661" description="Protein NATD1">
    <location>
        <begin position="1"/>
        <end position="109"/>
    </location>
</feature>
<feature type="domain" description="N-acetyltransferase" evidence="1">
    <location>
        <begin position="18"/>
        <end position="108"/>
    </location>
</feature>
<organism>
    <name type="scientific">Xenopus tropicalis</name>
    <name type="common">Western clawed frog</name>
    <name type="synonym">Silurana tropicalis</name>
    <dbReference type="NCBI Taxonomy" id="8364"/>
    <lineage>
        <taxon>Eukaryota</taxon>
        <taxon>Metazoa</taxon>
        <taxon>Chordata</taxon>
        <taxon>Craniata</taxon>
        <taxon>Vertebrata</taxon>
        <taxon>Euteleostomi</taxon>
        <taxon>Amphibia</taxon>
        <taxon>Batrachia</taxon>
        <taxon>Anura</taxon>
        <taxon>Pipoidea</taxon>
        <taxon>Pipidae</taxon>
        <taxon>Xenopodinae</taxon>
        <taxon>Xenopus</taxon>
        <taxon>Silurana</taxon>
    </lineage>
</organism>
<evidence type="ECO:0000255" key="1">
    <source>
        <dbReference type="PROSITE-ProRule" id="PRU00532"/>
    </source>
</evidence>
<evidence type="ECO:0000305" key="2"/>
<comment type="similarity">
    <text evidence="2">Belongs to the NATD1 family.</text>
</comment>
<comment type="sequence caution" evidence="2">
    <conflict type="erroneous initiation">
        <sequence resource="EMBL-CDS" id="CAJ81350"/>
    </conflict>
</comment>
<protein>
    <recommendedName>
        <fullName>Protein NATD1</fullName>
    </recommendedName>
    <alternativeName>
        <fullName>N-acetyltransferase domain-containing protein 1</fullName>
    </alternativeName>
</protein>
<keyword id="KW-1185">Reference proteome</keyword>
<dbReference type="EMBL" id="CR848524">
    <property type="protein sequence ID" value="CAJ81350.1"/>
    <property type="status" value="ALT_INIT"/>
    <property type="molecule type" value="mRNA"/>
</dbReference>
<dbReference type="EMBL" id="BC081288">
    <property type="protein sequence ID" value="AAH81288.1"/>
    <property type="molecule type" value="mRNA"/>
</dbReference>
<dbReference type="RefSeq" id="NP_001008090.1">
    <property type="nucleotide sequence ID" value="NM_001008089.1"/>
</dbReference>
<dbReference type="SMR" id="Q66IM5"/>
<dbReference type="FunCoup" id="Q66IM5">
    <property type="interactions" value="6"/>
</dbReference>
<dbReference type="PaxDb" id="8364-ENSXETP00000027372"/>
<dbReference type="DNASU" id="493452"/>
<dbReference type="GeneID" id="493452"/>
<dbReference type="KEGG" id="xtr:493452"/>
<dbReference type="AGR" id="Xenbase:XB-GENE-6458151"/>
<dbReference type="CTD" id="256302"/>
<dbReference type="eggNOG" id="ENOG502S2NM">
    <property type="taxonomic scope" value="Eukaryota"/>
</dbReference>
<dbReference type="HOGENOM" id="CLU_132888_1_1_1"/>
<dbReference type="InParanoid" id="Q66IM5"/>
<dbReference type="OMA" id="EIMTITH"/>
<dbReference type="OrthoDB" id="74247at2759"/>
<dbReference type="PhylomeDB" id="Q66IM5"/>
<dbReference type="TreeFam" id="TF314063"/>
<dbReference type="Proteomes" id="UP000008143">
    <property type="component" value="Chromosome 9"/>
</dbReference>
<dbReference type="Bgee" id="ENSXETG00000024880">
    <property type="expression patterns" value="Expressed in egg cell and 15 other cell types or tissues"/>
</dbReference>
<dbReference type="ExpressionAtlas" id="Q66IM5">
    <property type="expression patterns" value="differential"/>
</dbReference>
<dbReference type="FunFam" id="3.40.630.30:FF:000030">
    <property type="entry name" value="NATD1 isoform 1"/>
    <property type="match status" value="1"/>
</dbReference>
<dbReference type="Gene3D" id="3.40.630.30">
    <property type="match status" value="1"/>
</dbReference>
<dbReference type="InterPro" id="IPR016181">
    <property type="entry name" value="Acyl_CoA_acyltransferase"/>
</dbReference>
<dbReference type="InterPro" id="IPR045057">
    <property type="entry name" value="Gcn5-rel_NAT"/>
</dbReference>
<dbReference type="InterPro" id="IPR031165">
    <property type="entry name" value="GNAT_YJDJ"/>
</dbReference>
<dbReference type="PANTHER" id="PTHR31435">
    <property type="entry name" value="PROTEIN NATD1"/>
    <property type="match status" value="1"/>
</dbReference>
<dbReference type="PANTHER" id="PTHR31435:SF9">
    <property type="entry name" value="PROTEIN NATD1"/>
    <property type="match status" value="1"/>
</dbReference>
<dbReference type="Pfam" id="PF14542">
    <property type="entry name" value="Acetyltransf_CG"/>
    <property type="match status" value="1"/>
</dbReference>
<dbReference type="SUPFAM" id="SSF55729">
    <property type="entry name" value="Acyl-CoA N-acyltransferases (Nat)"/>
    <property type="match status" value="1"/>
</dbReference>
<dbReference type="PROSITE" id="PS51729">
    <property type="entry name" value="GNAT_YJDJ"/>
    <property type="match status" value="1"/>
</dbReference>
<gene>
    <name type="primary">natd1</name>
    <name type="synonym">gtlf3b</name>
    <name type="ORF">TEgg042j15.1</name>
</gene>
<sequence>MAHSVLDSMDPSSSIRVEHDRKRRQFSVRLNGCHDRAVLLYEYVGKKTVDLQHTEVPDAFRGRGIAKHLAKAAMDFVVEEDLKAHLTCWYIQKYVKENPLPQYLERLQP</sequence>
<accession>Q66IM5</accession>
<accession>Q28DZ2</accession>
<name>NATD1_XENTR</name>
<proteinExistence type="inferred from homology"/>
<reference key="1">
    <citation type="submission" date="2006-10" db="EMBL/GenBank/DDBJ databases">
        <authorList>
            <consortium name="Sanger Xenopus tropicalis EST/cDNA project"/>
        </authorList>
    </citation>
    <scope>NUCLEOTIDE SEQUENCE [LARGE SCALE MRNA]</scope>
    <source>
        <tissue>Egg</tissue>
    </source>
</reference>
<reference key="2">
    <citation type="submission" date="2004-08" db="EMBL/GenBank/DDBJ databases">
        <authorList>
            <consortium name="NIH - Xenopus Gene Collection (XGC) project"/>
        </authorList>
    </citation>
    <scope>NUCLEOTIDE SEQUENCE [LARGE SCALE MRNA]</scope>
    <source>
        <tissue>Embryo</tissue>
    </source>
</reference>